<proteinExistence type="inferred from homology"/>
<accession>A9WCA1</accession>
<feature type="chain" id="PRO_0000340337" description="DNA ligase">
    <location>
        <begin position="1"/>
        <end position="709"/>
    </location>
</feature>
<feature type="domain" description="BRCT" evidence="1">
    <location>
        <begin position="602"/>
        <end position="691"/>
    </location>
</feature>
<feature type="region of interest" description="Disordered" evidence="2">
    <location>
        <begin position="679"/>
        <end position="709"/>
    </location>
</feature>
<feature type="compositionally biased region" description="Pro residues" evidence="2">
    <location>
        <begin position="683"/>
        <end position="694"/>
    </location>
</feature>
<feature type="active site" description="N6-AMP-lysine intermediate" evidence="1">
    <location>
        <position position="117"/>
    </location>
</feature>
<feature type="binding site" evidence="1">
    <location>
        <begin position="34"/>
        <end position="38"/>
    </location>
    <ligand>
        <name>NAD(+)</name>
        <dbReference type="ChEBI" id="CHEBI:57540"/>
    </ligand>
</feature>
<feature type="binding site" evidence="1">
    <location>
        <begin position="83"/>
        <end position="84"/>
    </location>
    <ligand>
        <name>NAD(+)</name>
        <dbReference type="ChEBI" id="CHEBI:57540"/>
    </ligand>
</feature>
<feature type="binding site" evidence="1">
    <location>
        <position position="115"/>
    </location>
    <ligand>
        <name>NAD(+)</name>
        <dbReference type="ChEBI" id="CHEBI:57540"/>
    </ligand>
</feature>
<feature type="binding site" evidence="1">
    <location>
        <position position="138"/>
    </location>
    <ligand>
        <name>NAD(+)</name>
        <dbReference type="ChEBI" id="CHEBI:57540"/>
    </ligand>
</feature>
<feature type="binding site" evidence="1">
    <location>
        <position position="185"/>
    </location>
    <ligand>
        <name>NAD(+)</name>
        <dbReference type="ChEBI" id="CHEBI:57540"/>
    </ligand>
</feature>
<feature type="binding site" evidence="1">
    <location>
        <position position="301"/>
    </location>
    <ligand>
        <name>NAD(+)</name>
        <dbReference type="ChEBI" id="CHEBI:57540"/>
    </ligand>
</feature>
<feature type="binding site" evidence="1">
    <location>
        <position position="325"/>
    </location>
    <ligand>
        <name>NAD(+)</name>
        <dbReference type="ChEBI" id="CHEBI:57540"/>
    </ligand>
</feature>
<feature type="binding site" evidence="1">
    <location>
        <position position="419"/>
    </location>
    <ligand>
        <name>Zn(2+)</name>
        <dbReference type="ChEBI" id="CHEBI:29105"/>
    </ligand>
</feature>
<feature type="binding site" evidence="1">
    <location>
        <position position="422"/>
    </location>
    <ligand>
        <name>Zn(2+)</name>
        <dbReference type="ChEBI" id="CHEBI:29105"/>
    </ligand>
</feature>
<feature type="binding site" evidence="1">
    <location>
        <position position="437"/>
    </location>
    <ligand>
        <name>Zn(2+)</name>
        <dbReference type="ChEBI" id="CHEBI:29105"/>
    </ligand>
</feature>
<feature type="binding site" evidence="1">
    <location>
        <position position="443"/>
    </location>
    <ligand>
        <name>Zn(2+)</name>
        <dbReference type="ChEBI" id="CHEBI:29105"/>
    </ligand>
</feature>
<protein>
    <recommendedName>
        <fullName evidence="1">DNA ligase</fullName>
        <ecNumber evidence="1">6.5.1.2</ecNumber>
    </recommendedName>
    <alternativeName>
        <fullName evidence="1">Polydeoxyribonucleotide synthase [NAD(+)]</fullName>
    </alternativeName>
</protein>
<gene>
    <name evidence="1" type="primary">ligA</name>
    <name type="ordered locus">Caur_0241</name>
</gene>
<sequence>MSHTTVADRINELRSLIRRYDYHYYVLDDPIVSDAEYDALMTELRALEAAHPELITPDSPTQRVSGTPASQFAKVQHPQPMLSLGNAFTKADLLAWRDRVLRLLGPDAIVAYVVEPKIDGLAVALTYRDGRLVQGATRGDGEVGEDVTANLRTIGSIPLTLQATSTPQDDDLPTTLPTTIEVRGEVYMRTADFETLNDRLAAAGEKIFANPRNAAAGSLRQKDPTITAARPLRFFAYGVGVVEGISLSSQWQTLRYLRALGFPVNQDVRRFTDFAEVLAYCEAWMAKRDDLPYEADGVVIKIDDFAQQRELGVVGRDPRWAIAFKFPAREAITRLLDITVNVGRTGVVTPNAELEPVQIGGVTVRNASLHNADYIAQRDIRIGDYVIVKRAGDVIPYVVGPVIARRDGSERPWQFPTHCPACGSPLEREEGEAAWRCNNFSICPAQLVRRVEHFVSRSALDIVGMGERQAELFVQRGLIRDVADIFFLKADQLAELEGFGPKRIANLLAAIDAARQRPLDRLLVGLGIRYVGTVAAQTLVAALGSLDAIMAARQEELEQIPGIGPVVAASIVDFFSRPANRALIEKLRAAGVQMGGVSGPTRQSDTLAGKTFVLTGTLPSLSREQASALIVAHGGKVTDSVSKKTSYVVAGANAGSKLAKALQLGIPVIDEAGLLALIGTTAEPPPSPPPPPPETNTDGNQLLLPLDGE</sequence>
<keyword id="KW-0227">DNA damage</keyword>
<keyword id="KW-0234">DNA repair</keyword>
<keyword id="KW-0235">DNA replication</keyword>
<keyword id="KW-0436">Ligase</keyword>
<keyword id="KW-0460">Magnesium</keyword>
<keyword id="KW-0464">Manganese</keyword>
<keyword id="KW-0479">Metal-binding</keyword>
<keyword id="KW-0520">NAD</keyword>
<keyword id="KW-1185">Reference proteome</keyword>
<keyword id="KW-0862">Zinc</keyword>
<evidence type="ECO:0000255" key="1">
    <source>
        <dbReference type="HAMAP-Rule" id="MF_01588"/>
    </source>
</evidence>
<evidence type="ECO:0000256" key="2">
    <source>
        <dbReference type="SAM" id="MobiDB-lite"/>
    </source>
</evidence>
<comment type="function">
    <text evidence="1">DNA ligase that catalyzes the formation of phosphodiester linkages between 5'-phosphoryl and 3'-hydroxyl groups in double-stranded DNA using NAD as a coenzyme and as the energy source for the reaction. It is essential for DNA replication and repair of damaged DNA.</text>
</comment>
<comment type="catalytic activity">
    <reaction evidence="1">
        <text>NAD(+) + (deoxyribonucleotide)n-3'-hydroxyl + 5'-phospho-(deoxyribonucleotide)m = (deoxyribonucleotide)n+m + AMP + beta-nicotinamide D-nucleotide.</text>
        <dbReference type="EC" id="6.5.1.2"/>
    </reaction>
</comment>
<comment type="cofactor">
    <cofactor evidence="1">
        <name>Mg(2+)</name>
        <dbReference type="ChEBI" id="CHEBI:18420"/>
    </cofactor>
    <cofactor evidence="1">
        <name>Mn(2+)</name>
        <dbReference type="ChEBI" id="CHEBI:29035"/>
    </cofactor>
</comment>
<comment type="similarity">
    <text evidence="1">Belongs to the NAD-dependent DNA ligase family. LigA subfamily.</text>
</comment>
<organism>
    <name type="scientific">Chloroflexus aurantiacus (strain ATCC 29366 / DSM 635 / J-10-fl)</name>
    <dbReference type="NCBI Taxonomy" id="324602"/>
    <lineage>
        <taxon>Bacteria</taxon>
        <taxon>Bacillati</taxon>
        <taxon>Chloroflexota</taxon>
        <taxon>Chloroflexia</taxon>
        <taxon>Chloroflexales</taxon>
        <taxon>Chloroflexineae</taxon>
        <taxon>Chloroflexaceae</taxon>
        <taxon>Chloroflexus</taxon>
    </lineage>
</organism>
<reference key="1">
    <citation type="journal article" date="2011" name="BMC Genomics">
        <title>Complete genome sequence of the filamentous anoxygenic phototrophic bacterium Chloroflexus aurantiacus.</title>
        <authorList>
            <person name="Tang K.H."/>
            <person name="Barry K."/>
            <person name="Chertkov O."/>
            <person name="Dalin E."/>
            <person name="Han C.S."/>
            <person name="Hauser L.J."/>
            <person name="Honchak B.M."/>
            <person name="Karbach L.E."/>
            <person name="Land M.L."/>
            <person name="Lapidus A."/>
            <person name="Larimer F.W."/>
            <person name="Mikhailova N."/>
            <person name="Pitluck S."/>
            <person name="Pierson B.K."/>
            <person name="Blankenship R.E."/>
        </authorList>
    </citation>
    <scope>NUCLEOTIDE SEQUENCE [LARGE SCALE GENOMIC DNA]</scope>
    <source>
        <strain>ATCC 29366 / DSM 635 / J-10-fl</strain>
    </source>
</reference>
<dbReference type="EC" id="6.5.1.2" evidence="1"/>
<dbReference type="EMBL" id="CP000909">
    <property type="protein sequence ID" value="ABY33494.1"/>
    <property type="molecule type" value="Genomic_DNA"/>
</dbReference>
<dbReference type="RefSeq" id="WP_012256150.1">
    <property type="nucleotide sequence ID" value="NC_010175.1"/>
</dbReference>
<dbReference type="RefSeq" id="YP_001633883.1">
    <property type="nucleotide sequence ID" value="NC_010175.1"/>
</dbReference>
<dbReference type="SMR" id="A9WCA1"/>
<dbReference type="FunCoup" id="A9WCA1">
    <property type="interactions" value="338"/>
</dbReference>
<dbReference type="STRING" id="324602.Caur_0241"/>
<dbReference type="EnsemblBacteria" id="ABY33494">
    <property type="protein sequence ID" value="ABY33494"/>
    <property type="gene ID" value="Caur_0241"/>
</dbReference>
<dbReference type="KEGG" id="cau:Caur_0241"/>
<dbReference type="PATRIC" id="fig|324602.8.peg.279"/>
<dbReference type="eggNOG" id="COG0272">
    <property type="taxonomic scope" value="Bacteria"/>
</dbReference>
<dbReference type="HOGENOM" id="CLU_007764_2_1_0"/>
<dbReference type="InParanoid" id="A9WCA1"/>
<dbReference type="Proteomes" id="UP000002008">
    <property type="component" value="Chromosome"/>
</dbReference>
<dbReference type="GO" id="GO:0005829">
    <property type="term" value="C:cytosol"/>
    <property type="evidence" value="ECO:0000318"/>
    <property type="project" value="GO_Central"/>
</dbReference>
<dbReference type="GO" id="GO:0003677">
    <property type="term" value="F:DNA binding"/>
    <property type="evidence" value="ECO:0007669"/>
    <property type="project" value="InterPro"/>
</dbReference>
<dbReference type="GO" id="GO:0003911">
    <property type="term" value="F:DNA ligase (NAD+) activity"/>
    <property type="evidence" value="ECO:0000318"/>
    <property type="project" value="GO_Central"/>
</dbReference>
<dbReference type="GO" id="GO:0046872">
    <property type="term" value="F:metal ion binding"/>
    <property type="evidence" value="ECO:0007669"/>
    <property type="project" value="UniProtKB-KW"/>
</dbReference>
<dbReference type="GO" id="GO:0006281">
    <property type="term" value="P:DNA repair"/>
    <property type="evidence" value="ECO:0007669"/>
    <property type="project" value="UniProtKB-KW"/>
</dbReference>
<dbReference type="GO" id="GO:0006260">
    <property type="term" value="P:DNA replication"/>
    <property type="evidence" value="ECO:0007669"/>
    <property type="project" value="UniProtKB-KW"/>
</dbReference>
<dbReference type="CDD" id="cd00114">
    <property type="entry name" value="LIGANc"/>
    <property type="match status" value="1"/>
</dbReference>
<dbReference type="FunFam" id="1.10.150.20:FF:000006">
    <property type="entry name" value="DNA ligase"/>
    <property type="match status" value="1"/>
</dbReference>
<dbReference type="FunFam" id="1.10.150.20:FF:000007">
    <property type="entry name" value="DNA ligase"/>
    <property type="match status" value="1"/>
</dbReference>
<dbReference type="FunFam" id="1.10.287.610:FF:000002">
    <property type="entry name" value="DNA ligase"/>
    <property type="match status" value="1"/>
</dbReference>
<dbReference type="FunFam" id="2.40.50.140:FF:000012">
    <property type="entry name" value="DNA ligase"/>
    <property type="match status" value="1"/>
</dbReference>
<dbReference type="FunFam" id="3.30.470.30:FF:000001">
    <property type="entry name" value="DNA ligase"/>
    <property type="match status" value="1"/>
</dbReference>
<dbReference type="FunFam" id="6.20.10.30:FF:000007">
    <property type="entry name" value="DNA ligase"/>
    <property type="match status" value="1"/>
</dbReference>
<dbReference type="Gene3D" id="6.20.10.30">
    <property type="match status" value="1"/>
</dbReference>
<dbReference type="Gene3D" id="1.10.150.20">
    <property type="entry name" value="5' to 3' exonuclease, C-terminal subdomain"/>
    <property type="match status" value="2"/>
</dbReference>
<dbReference type="Gene3D" id="3.40.50.10190">
    <property type="entry name" value="BRCT domain"/>
    <property type="match status" value="1"/>
</dbReference>
<dbReference type="Gene3D" id="3.30.470.30">
    <property type="entry name" value="DNA ligase/mRNA capping enzyme"/>
    <property type="match status" value="1"/>
</dbReference>
<dbReference type="Gene3D" id="1.10.287.610">
    <property type="entry name" value="Helix hairpin bin"/>
    <property type="match status" value="1"/>
</dbReference>
<dbReference type="Gene3D" id="2.40.50.140">
    <property type="entry name" value="Nucleic acid-binding proteins"/>
    <property type="match status" value="1"/>
</dbReference>
<dbReference type="HAMAP" id="MF_01588">
    <property type="entry name" value="DNA_ligase_A"/>
    <property type="match status" value="1"/>
</dbReference>
<dbReference type="InterPro" id="IPR001357">
    <property type="entry name" value="BRCT_dom"/>
</dbReference>
<dbReference type="InterPro" id="IPR036420">
    <property type="entry name" value="BRCT_dom_sf"/>
</dbReference>
<dbReference type="InterPro" id="IPR041663">
    <property type="entry name" value="DisA/LigA_HHH"/>
</dbReference>
<dbReference type="InterPro" id="IPR001679">
    <property type="entry name" value="DNA_ligase"/>
</dbReference>
<dbReference type="InterPro" id="IPR018239">
    <property type="entry name" value="DNA_ligase_AS"/>
</dbReference>
<dbReference type="InterPro" id="IPR013839">
    <property type="entry name" value="DNAligase_adenylation"/>
</dbReference>
<dbReference type="InterPro" id="IPR013840">
    <property type="entry name" value="DNAligase_N"/>
</dbReference>
<dbReference type="InterPro" id="IPR003583">
    <property type="entry name" value="Hlx-hairpin-Hlx_DNA-bd_motif"/>
</dbReference>
<dbReference type="InterPro" id="IPR012340">
    <property type="entry name" value="NA-bd_OB-fold"/>
</dbReference>
<dbReference type="InterPro" id="IPR004150">
    <property type="entry name" value="NAD_DNA_ligase_OB"/>
</dbReference>
<dbReference type="InterPro" id="IPR010994">
    <property type="entry name" value="RuvA_2-like"/>
</dbReference>
<dbReference type="InterPro" id="IPR004149">
    <property type="entry name" value="Znf_DNAligase_C4"/>
</dbReference>
<dbReference type="NCBIfam" id="TIGR00575">
    <property type="entry name" value="dnlj"/>
    <property type="match status" value="1"/>
</dbReference>
<dbReference type="NCBIfam" id="NF005932">
    <property type="entry name" value="PRK07956.1"/>
    <property type="match status" value="1"/>
</dbReference>
<dbReference type="PANTHER" id="PTHR23389">
    <property type="entry name" value="CHROMOSOME TRANSMISSION FIDELITY FACTOR 18"/>
    <property type="match status" value="1"/>
</dbReference>
<dbReference type="PANTHER" id="PTHR23389:SF6">
    <property type="entry name" value="REPLICATION FACTOR C SUBUNIT 1"/>
    <property type="match status" value="1"/>
</dbReference>
<dbReference type="Pfam" id="PF00533">
    <property type="entry name" value="BRCT"/>
    <property type="match status" value="1"/>
</dbReference>
<dbReference type="Pfam" id="PF01653">
    <property type="entry name" value="DNA_ligase_aden"/>
    <property type="match status" value="1"/>
</dbReference>
<dbReference type="Pfam" id="PF03120">
    <property type="entry name" value="DNA_ligase_OB"/>
    <property type="match status" value="1"/>
</dbReference>
<dbReference type="Pfam" id="PF03119">
    <property type="entry name" value="DNA_ligase_ZBD"/>
    <property type="match status" value="1"/>
</dbReference>
<dbReference type="Pfam" id="PF12826">
    <property type="entry name" value="HHH_2"/>
    <property type="match status" value="1"/>
</dbReference>
<dbReference type="Pfam" id="PF14520">
    <property type="entry name" value="HHH_5"/>
    <property type="match status" value="1"/>
</dbReference>
<dbReference type="Pfam" id="PF22745">
    <property type="entry name" value="Nlig-Ia"/>
    <property type="match status" value="1"/>
</dbReference>
<dbReference type="PIRSF" id="PIRSF001604">
    <property type="entry name" value="LigA"/>
    <property type="match status" value="1"/>
</dbReference>
<dbReference type="SMART" id="SM00292">
    <property type="entry name" value="BRCT"/>
    <property type="match status" value="1"/>
</dbReference>
<dbReference type="SMART" id="SM00278">
    <property type="entry name" value="HhH1"/>
    <property type="match status" value="3"/>
</dbReference>
<dbReference type="SMART" id="SM00532">
    <property type="entry name" value="LIGANc"/>
    <property type="match status" value="1"/>
</dbReference>
<dbReference type="SUPFAM" id="SSF52113">
    <property type="entry name" value="BRCT domain"/>
    <property type="match status" value="1"/>
</dbReference>
<dbReference type="SUPFAM" id="SSF56091">
    <property type="entry name" value="DNA ligase/mRNA capping enzyme, catalytic domain"/>
    <property type="match status" value="1"/>
</dbReference>
<dbReference type="SUPFAM" id="SSF50249">
    <property type="entry name" value="Nucleic acid-binding proteins"/>
    <property type="match status" value="1"/>
</dbReference>
<dbReference type="SUPFAM" id="SSF47781">
    <property type="entry name" value="RuvA domain 2-like"/>
    <property type="match status" value="1"/>
</dbReference>
<dbReference type="PROSITE" id="PS50172">
    <property type="entry name" value="BRCT"/>
    <property type="match status" value="1"/>
</dbReference>
<dbReference type="PROSITE" id="PS01055">
    <property type="entry name" value="DNA_LIGASE_N1"/>
    <property type="match status" value="1"/>
</dbReference>
<name>DNLJ_CHLAA</name>